<accession>B7UI92</accession>
<proteinExistence type="inferred from homology"/>
<evidence type="ECO:0000255" key="1">
    <source>
        <dbReference type="HAMAP-Rule" id="MF_01414"/>
    </source>
</evidence>
<sequence length="176" mass="20170">MILIIYAHPYPHHSHANKRMLEQARTLEGVEIRSLYQLYPDFNIDIAAEQEALSRADLIVWQHPMQWYSIPPLLKLWIDKVFSHGWAYGHGGTALHGKHLLWAVTTGGGESHFEIGAHPGFDVLSQPLQATAIYCGLNWLPPFAMHCTFICDDETLEGQARHYKQRLLEWQEAHHG</sequence>
<dbReference type="EC" id="1.6.5.2" evidence="1"/>
<dbReference type="EMBL" id="FM180568">
    <property type="protein sequence ID" value="CAS07595.1"/>
    <property type="molecule type" value="Genomic_DNA"/>
</dbReference>
<dbReference type="RefSeq" id="WP_000600725.1">
    <property type="nucleotide sequence ID" value="NC_011601.1"/>
</dbReference>
<dbReference type="SMR" id="B7UI92"/>
<dbReference type="GeneID" id="89519427"/>
<dbReference type="KEGG" id="ecg:E2348C_0047"/>
<dbReference type="HOGENOM" id="CLU_058643_0_2_6"/>
<dbReference type="Proteomes" id="UP000008205">
    <property type="component" value="Chromosome"/>
</dbReference>
<dbReference type="GO" id="GO:0005886">
    <property type="term" value="C:plasma membrane"/>
    <property type="evidence" value="ECO:0007669"/>
    <property type="project" value="UniProtKB-SubCell"/>
</dbReference>
<dbReference type="GO" id="GO:0009055">
    <property type="term" value="F:electron transfer activity"/>
    <property type="evidence" value="ECO:0007669"/>
    <property type="project" value="TreeGrafter"/>
</dbReference>
<dbReference type="GO" id="GO:0010181">
    <property type="term" value="F:FMN binding"/>
    <property type="evidence" value="ECO:0007669"/>
    <property type="project" value="UniProtKB-UniRule"/>
</dbReference>
<dbReference type="GO" id="GO:0050136">
    <property type="term" value="F:NADH:ubiquinone reductase (non-electrogenic) activity"/>
    <property type="evidence" value="ECO:0007669"/>
    <property type="project" value="RHEA"/>
</dbReference>
<dbReference type="GO" id="GO:0008753">
    <property type="term" value="F:NADPH dehydrogenase (quinone) activity"/>
    <property type="evidence" value="ECO:0007669"/>
    <property type="project" value="RHEA"/>
</dbReference>
<dbReference type="GO" id="GO:1901381">
    <property type="term" value="P:positive regulation of potassium ion transmembrane transport"/>
    <property type="evidence" value="ECO:0007669"/>
    <property type="project" value="UniProtKB-UniRule"/>
</dbReference>
<dbReference type="GO" id="GO:0006813">
    <property type="term" value="P:potassium ion transport"/>
    <property type="evidence" value="ECO:0007669"/>
    <property type="project" value="InterPro"/>
</dbReference>
<dbReference type="FunFam" id="3.40.50.360:FF:000008">
    <property type="entry name" value="Glutathione-regulated potassium-efflux system ancillary protein KefF"/>
    <property type="match status" value="1"/>
</dbReference>
<dbReference type="Gene3D" id="3.40.50.360">
    <property type="match status" value="1"/>
</dbReference>
<dbReference type="HAMAP" id="MF_01414">
    <property type="entry name" value="K_H_efflux_KefF"/>
    <property type="match status" value="1"/>
</dbReference>
<dbReference type="InterPro" id="IPR003680">
    <property type="entry name" value="Flavodoxin_fold"/>
</dbReference>
<dbReference type="InterPro" id="IPR029039">
    <property type="entry name" value="Flavoprotein-like_sf"/>
</dbReference>
<dbReference type="InterPro" id="IPR023948">
    <property type="entry name" value="K_H_efflux_KefF"/>
</dbReference>
<dbReference type="InterPro" id="IPR046980">
    <property type="entry name" value="KefG/KefF"/>
</dbReference>
<dbReference type="NCBIfam" id="NF002044">
    <property type="entry name" value="PRK00871.1"/>
    <property type="match status" value="1"/>
</dbReference>
<dbReference type="PANTHER" id="PTHR47307:SF2">
    <property type="entry name" value="GLUTATHIONE-REGULATED POTASSIUM-EFFLUX SYSTEM ANCILLARY PROTEIN KEFF"/>
    <property type="match status" value="1"/>
</dbReference>
<dbReference type="PANTHER" id="PTHR47307">
    <property type="entry name" value="GLUTATHIONE-REGULATED POTASSIUM-EFFLUX SYSTEM ANCILLARY PROTEIN KEFG"/>
    <property type="match status" value="1"/>
</dbReference>
<dbReference type="Pfam" id="PF02525">
    <property type="entry name" value="Flavodoxin_2"/>
    <property type="match status" value="1"/>
</dbReference>
<dbReference type="SUPFAM" id="SSF52218">
    <property type="entry name" value="Flavoproteins"/>
    <property type="match status" value="1"/>
</dbReference>
<gene>
    <name evidence="1" type="primary">kefF</name>
    <name type="ordered locus">E2348C_0047</name>
</gene>
<protein>
    <recommendedName>
        <fullName evidence="1">Glutathione-regulated potassium-efflux system ancillary protein KefF</fullName>
    </recommendedName>
    <alternativeName>
        <fullName evidence="1">Quinone oxidoreductase KefF</fullName>
        <ecNumber evidence="1">1.6.5.2</ecNumber>
    </alternativeName>
</protein>
<keyword id="KW-0997">Cell inner membrane</keyword>
<keyword id="KW-1003">Cell membrane</keyword>
<keyword id="KW-0285">Flavoprotein</keyword>
<keyword id="KW-0288">FMN</keyword>
<keyword id="KW-0472">Membrane</keyword>
<keyword id="KW-0520">NAD</keyword>
<keyword id="KW-0560">Oxidoreductase</keyword>
<keyword id="KW-1185">Reference proteome</keyword>
<feature type="chain" id="PRO_1000184619" description="Glutathione-regulated potassium-efflux system ancillary protein KefF">
    <location>
        <begin position="1"/>
        <end position="176"/>
    </location>
</feature>
<feature type="binding site" evidence="1">
    <location>
        <position position="8"/>
    </location>
    <ligand>
        <name>FMN</name>
        <dbReference type="ChEBI" id="CHEBI:58210"/>
    </ligand>
</feature>
<feature type="binding site" evidence="1">
    <location>
        <begin position="14"/>
        <end position="17"/>
    </location>
    <ligand>
        <name>FMN</name>
        <dbReference type="ChEBI" id="CHEBI:58210"/>
    </ligand>
</feature>
<feature type="binding site" evidence="1">
    <location>
        <begin position="65"/>
        <end position="68"/>
    </location>
    <ligand>
        <name>FMN</name>
        <dbReference type="ChEBI" id="CHEBI:58210"/>
    </ligand>
</feature>
<feature type="binding site" evidence="1">
    <location>
        <begin position="105"/>
        <end position="108"/>
    </location>
    <ligand>
        <name>FMN</name>
        <dbReference type="ChEBI" id="CHEBI:58210"/>
    </ligand>
</feature>
<reference key="1">
    <citation type="journal article" date="2009" name="J. Bacteriol.">
        <title>Complete genome sequence and comparative genome analysis of enteropathogenic Escherichia coli O127:H6 strain E2348/69.</title>
        <authorList>
            <person name="Iguchi A."/>
            <person name="Thomson N.R."/>
            <person name="Ogura Y."/>
            <person name="Saunders D."/>
            <person name="Ooka T."/>
            <person name="Henderson I.R."/>
            <person name="Harris D."/>
            <person name="Asadulghani M."/>
            <person name="Kurokawa K."/>
            <person name="Dean P."/>
            <person name="Kenny B."/>
            <person name="Quail M.A."/>
            <person name="Thurston S."/>
            <person name="Dougan G."/>
            <person name="Hayashi T."/>
            <person name="Parkhill J."/>
            <person name="Frankel G."/>
        </authorList>
    </citation>
    <scope>NUCLEOTIDE SEQUENCE [LARGE SCALE GENOMIC DNA]</scope>
    <source>
        <strain>E2348/69 / EPEC</strain>
    </source>
</reference>
<organism>
    <name type="scientific">Escherichia coli O127:H6 (strain E2348/69 / EPEC)</name>
    <dbReference type="NCBI Taxonomy" id="574521"/>
    <lineage>
        <taxon>Bacteria</taxon>
        <taxon>Pseudomonadati</taxon>
        <taxon>Pseudomonadota</taxon>
        <taxon>Gammaproteobacteria</taxon>
        <taxon>Enterobacterales</taxon>
        <taxon>Enterobacteriaceae</taxon>
        <taxon>Escherichia</taxon>
    </lineage>
</organism>
<name>KEFF_ECO27</name>
<comment type="function">
    <text evidence="1">Regulatory subunit of a potassium efflux system that confers protection against electrophiles. Required for full activity of KefC. Shows redox enzymatic activity, but this enzymatic activity is not required for activation of KefC.</text>
</comment>
<comment type="catalytic activity">
    <reaction evidence="1">
        <text>a quinone + NADH + H(+) = a quinol + NAD(+)</text>
        <dbReference type="Rhea" id="RHEA:46160"/>
        <dbReference type="ChEBI" id="CHEBI:15378"/>
        <dbReference type="ChEBI" id="CHEBI:24646"/>
        <dbReference type="ChEBI" id="CHEBI:57540"/>
        <dbReference type="ChEBI" id="CHEBI:57945"/>
        <dbReference type="ChEBI" id="CHEBI:132124"/>
        <dbReference type="EC" id="1.6.5.2"/>
    </reaction>
</comment>
<comment type="catalytic activity">
    <reaction evidence="1">
        <text>a quinone + NADPH + H(+) = a quinol + NADP(+)</text>
        <dbReference type="Rhea" id="RHEA:46164"/>
        <dbReference type="ChEBI" id="CHEBI:15378"/>
        <dbReference type="ChEBI" id="CHEBI:24646"/>
        <dbReference type="ChEBI" id="CHEBI:57783"/>
        <dbReference type="ChEBI" id="CHEBI:58349"/>
        <dbReference type="ChEBI" id="CHEBI:132124"/>
        <dbReference type="EC" id="1.6.5.2"/>
    </reaction>
</comment>
<comment type="cofactor">
    <cofactor evidence="1">
        <name>FMN</name>
        <dbReference type="ChEBI" id="CHEBI:58210"/>
    </cofactor>
</comment>
<comment type="subunit">
    <text evidence="1">Homodimer. Interacts with KefC.</text>
</comment>
<comment type="subcellular location">
    <subcellularLocation>
        <location evidence="1">Cell inner membrane</location>
        <topology evidence="1">Peripheral membrane protein</topology>
        <orientation evidence="1">Cytoplasmic side</orientation>
    </subcellularLocation>
</comment>
<comment type="similarity">
    <text evidence="1">Belongs to the NAD(P)H dehydrogenase (quinone) family. KefF subfamily.</text>
</comment>